<dbReference type="EMBL" id="U22173">
    <property type="protein sequence ID" value="AAC59693.1"/>
    <property type="molecule type" value="mRNA"/>
</dbReference>
<dbReference type="EMBL" id="L07536">
    <property type="protein sequence ID" value="AAA49989.1"/>
    <property type="molecule type" value="mRNA"/>
</dbReference>
<dbReference type="PIR" id="I51680">
    <property type="entry name" value="I51680"/>
</dbReference>
<dbReference type="RefSeq" id="NP_001083754.1">
    <molecule id="P31291-1"/>
    <property type="nucleotide sequence ID" value="NM_001090285.1"/>
</dbReference>
<dbReference type="SMR" id="P31291"/>
<dbReference type="GlyCosmos" id="P31291">
    <property type="glycosylation" value="3 sites, No reported glycans"/>
</dbReference>
<dbReference type="GeneID" id="399098"/>
<dbReference type="KEGG" id="xla:399098"/>
<dbReference type="AGR" id="Xenbase:XB-GENE-866182"/>
<dbReference type="CTD" id="399098"/>
<dbReference type="Xenbase" id="XB-GENE-866182">
    <property type="gene designation" value="wnt8b.S"/>
</dbReference>
<dbReference type="OrthoDB" id="5945655at2759"/>
<dbReference type="Proteomes" id="UP000186698">
    <property type="component" value="Chromosome 7S"/>
</dbReference>
<dbReference type="Bgee" id="399098">
    <property type="expression patterns" value="Expressed in brain and 3 other cell types or tissues"/>
</dbReference>
<dbReference type="GO" id="GO:0005615">
    <property type="term" value="C:extracellular space"/>
    <property type="evidence" value="ECO:0000318"/>
    <property type="project" value="GO_Central"/>
</dbReference>
<dbReference type="GO" id="GO:0005125">
    <property type="term" value="F:cytokine activity"/>
    <property type="evidence" value="ECO:0000318"/>
    <property type="project" value="GO_Central"/>
</dbReference>
<dbReference type="GO" id="GO:0005109">
    <property type="term" value="F:frizzled binding"/>
    <property type="evidence" value="ECO:0000318"/>
    <property type="project" value="GO_Central"/>
</dbReference>
<dbReference type="GO" id="GO:0060070">
    <property type="term" value="P:canonical Wnt signaling pathway"/>
    <property type="evidence" value="ECO:0000316"/>
    <property type="project" value="BHF-UCL"/>
</dbReference>
<dbReference type="GO" id="GO:0045165">
    <property type="term" value="P:cell fate commitment"/>
    <property type="evidence" value="ECO:0000318"/>
    <property type="project" value="GO_Central"/>
</dbReference>
<dbReference type="GO" id="GO:0048263">
    <property type="term" value="P:determination of dorsal identity"/>
    <property type="evidence" value="ECO:0000315"/>
    <property type="project" value="BHF-UCL"/>
</dbReference>
<dbReference type="GO" id="GO:0007369">
    <property type="term" value="P:gastrulation"/>
    <property type="evidence" value="ECO:0000270"/>
    <property type="project" value="BHF-UCL"/>
</dbReference>
<dbReference type="GO" id="GO:0030182">
    <property type="term" value="P:neuron differentiation"/>
    <property type="evidence" value="ECO:0000318"/>
    <property type="project" value="GO_Central"/>
</dbReference>
<dbReference type="GO" id="GO:0045944">
    <property type="term" value="P:positive regulation of transcription by RNA polymerase II"/>
    <property type="evidence" value="ECO:0000316"/>
    <property type="project" value="BHF-UCL"/>
</dbReference>
<dbReference type="FunFam" id="3.30.2460.20:FF:000003">
    <property type="entry name" value="Protein Wnt"/>
    <property type="match status" value="1"/>
</dbReference>
<dbReference type="Gene3D" id="3.30.2460.20">
    <property type="match status" value="1"/>
</dbReference>
<dbReference type="InterPro" id="IPR005817">
    <property type="entry name" value="Wnt"/>
</dbReference>
<dbReference type="InterPro" id="IPR013301">
    <property type="entry name" value="Wnt8"/>
</dbReference>
<dbReference type="InterPro" id="IPR043158">
    <property type="entry name" value="Wnt_C"/>
</dbReference>
<dbReference type="InterPro" id="IPR018161">
    <property type="entry name" value="Wnt_CS"/>
</dbReference>
<dbReference type="PANTHER" id="PTHR12027:SF94">
    <property type="entry name" value="PROTEIN WNT-8B"/>
    <property type="match status" value="1"/>
</dbReference>
<dbReference type="PANTHER" id="PTHR12027">
    <property type="entry name" value="WNT RELATED"/>
    <property type="match status" value="1"/>
</dbReference>
<dbReference type="Pfam" id="PF00110">
    <property type="entry name" value="wnt"/>
    <property type="match status" value="2"/>
</dbReference>
<dbReference type="PRINTS" id="PR01892">
    <property type="entry name" value="WNT8PROTEIN"/>
</dbReference>
<dbReference type="PRINTS" id="PR01349">
    <property type="entry name" value="WNTPROTEIN"/>
</dbReference>
<dbReference type="SMART" id="SM00097">
    <property type="entry name" value="WNT1"/>
    <property type="match status" value="1"/>
</dbReference>
<dbReference type="PROSITE" id="PS00246">
    <property type="entry name" value="WNT1"/>
    <property type="match status" value="1"/>
</dbReference>
<name>WNT8B_XENLA</name>
<accession>P31291</accession>
<comment type="function">
    <text>Ligand for members of the frizzled family of seven transmembrane receptors. Plays a role in the initiation of dorsal axis development. May activate a Nieuwkoop center-like signaling pathway.</text>
</comment>
<comment type="subcellular location">
    <subcellularLocation>
        <location>Secreted</location>
        <location>Extracellular space</location>
        <location>Extracellular matrix</location>
    </subcellularLocation>
</comment>
<comment type="alternative products">
    <event type="alternative splicing"/>
    <isoform>
        <id>P31291-1</id>
        <name>Long</name>
        <sequence type="displayed"/>
    </isoform>
    <isoform>
        <id>P31291-2</id>
        <name>Short</name>
        <sequence type="described" ref="VSP_006795"/>
    </isoform>
</comment>
<comment type="tissue specificity">
    <text>In adults, in brain.</text>
</comment>
<comment type="developmental stage">
    <text>The short form increases from the onset of gastrulation to swimming tadpoles and the longer form appears at the end of gastrulation, is present throughout the tailbud stages and then decline in tadpoles.</text>
</comment>
<comment type="PTM">
    <text evidence="1 2">Palmitoleoylation is required for efficient binding to frizzled receptors (By similarity). Depalmitoleoylation leads to Wnt signaling pathway inhibition (By similarity).</text>
</comment>
<comment type="PTM">
    <text evidence="1">Proteolytic processing by tiki1 and tiki2 promotes oxidation and formation of large disulfide-bond oligomers, leading to inactivation of wnt8b.</text>
</comment>
<comment type="similarity">
    <text evidence="4">Belongs to the Wnt family.</text>
</comment>
<keyword id="KW-0025">Alternative splicing</keyword>
<keyword id="KW-0217">Developmental protein</keyword>
<keyword id="KW-1015">Disulfide bond</keyword>
<keyword id="KW-0272">Extracellular matrix</keyword>
<keyword id="KW-0325">Glycoprotein</keyword>
<keyword id="KW-0449">Lipoprotein</keyword>
<keyword id="KW-1185">Reference proteome</keyword>
<keyword id="KW-0964">Secreted</keyword>
<keyword id="KW-0732">Signal</keyword>
<keyword id="KW-0879">Wnt signaling pathway</keyword>
<organism>
    <name type="scientific">Xenopus laevis</name>
    <name type="common">African clawed frog</name>
    <dbReference type="NCBI Taxonomy" id="8355"/>
    <lineage>
        <taxon>Eukaryota</taxon>
        <taxon>Metazoa</taxon>
        <taxon>Chordata</taxon>
        <taxon>Craniata</taxon>
        <taxon>Vertebrata</taxon>
        <taxon>Euteleostomi</taxon>
        <taxon>Amphibia</taxon>
        <taxon>Batrachia</taxon>
        <taxon>Anura</taxon>
        <taxon>Pipoidea</taxon>
        <taxon>Pipidae</taxon>
        <taxon>Xenopodinae</taxon>
        <taxon>Xenopus</taxon>
        <taxon>Xenopus</taxon>
    </lineage>
</organism>
<feature type="signal peptide" evidence="3">
    <location>
        <begin position="1"/>
        <end position="22"/>
    </location>
</feature>
<feature type="chain" id="PRO_0000041453" description="Protein Wnt-8b">
    <location>
        <begin position="23"/>
        <end position="428"/>
    </location>
</feature>
<feature type="lipid moiety-binding region" description="O-palmitoleoyl serine" evidence="1">
    <location>
        <position position="259"/>
    </location>
</feature>
<feature type="glycosylation site" description="N-linked (GlcNAc...) asparagine" evidence="3">
    <location>
        <position position="123"/>
    </location>
</feature>
<feature type="glycosylation site" description="N-linked (GlcNAc...) asparagine" evidence="3">
    <location>
        <position position="176"/>
    </location>
</feature>
<feature type="glycosylation site" description="N-linked (GlcNAc...) asparagine" evidence="3">
    <location>
        <position position="332"/>
    </location>
</feature>
<feature type="disulfide bond" evidence="1">
    <location>
        <begin position="54"/>
        <end position="65"/>
    </location>
</feature>
<feature type="disulfide bond" evidence="1">
    <location>
        <begin position="177"/>
        <end position="185"/>
    </location>
</feature>
<feature type="disulfide bond" evidence="1">
    <location>
        <begin position="187"/>
        <end position="205"/>
    </location>
</feature>
<feature type="disulfide bond" evidence="1">
    <location>
        <begin position="253"/>
        <end position="267"/>
    </location>
</feature>
<feature type="disulfide bond" evidence="1">
    <location>
        <begin position="255"/>
        <end position="262"/>
    </location>
</feature>
<feature type="disulfide bond" evidence="1">
    <location>
        <begin position="329"/>
        <end position="367"/>
    </location>
</feature>
<feature type="disulfide bond" evidence="1">
    <location>
        <begin position="345"/>
        <end position="360"/>
    </location>
</feature>
<feature type="disulfide bond" evidence="1">
    <location>
        <begin position="364"/>
        <end position="406"/>
    </location>
</feature>
<feature type="disulfide bond" evidence="1">
    <location>
        <begin position="382"/>
        <end position="397"/>
    </location>
</feature>
<feature type="disulfide bond" evidence="1">
    <location>
        <begin position="384"/>
        <end position="394"/>
    </location>
</feature>
<feature type="disulfide bond" evidence="1">
    <location>
        <begin position="389"/>
        <end position="390"/>
    </location>
</feature>
<feature type="splice variant" id="VSP_006795" description="In isoform Short." evidence="4">
    <location>
        <begin position="81"/>
        <end position="153"/>
    </location>
</feature>
<feature type="sequence conflict" description="In Ref. 2; AAA49989." evidence="4" ref="2">
    <original>L</original>
    <variation>P</variation>
    <location>
        <position position="293"/>
    </location>
</feature>
<feature type="sequence conflict" description="In Ref. 2; AAA49989." evidence="4" ref="2">
    <original>E</original>
    <variation>D</variation>
    <location>
        <position position="356"/>
    </location>
</feature>
<feature type="sequence conflict" description="In Ref. 2; AAA49989." evidence="4" ref="2">
    <original>K</original>
    <variation>E</variation>
    <location>
        <position position="372"/>
    </location>
</feature>
<proteinExistence type="evidence at transcript level"/>
<evidence type="ECO:0000250" key="1">
    <source>
        <dbReference type="UniProtKB" id="P28026"/>
    </source>
</evidence>
<evidence type="ECO:0000250" key="2">
    <source>
        <dbReference type="UniProtKB" id="P56704"/>
    </source>
</evidence>
<evidence type="ECO:0000255" key="3"/>
<evidence type="ECO:0000305" key="4"/>
<sequence>MFYTGSFWFIFFILPAIPFCHSWSVNNFLMTGPKAYLIYSSSVAAGAQSGIEECKYQFAWDKWNCPERTLQLSSHSGLRSDLNIHSTGASPAGSGLYDTGPTSPVWSINFNRILFSRLESHFNKTFLSRLQIPFPQGHTVQSATSLSTGFLSPANRETAFVHAISYAGVMYTLTRNCSLGDFDNCGCDDSRNGQLGGQGWLWGGCSDNVGFGETISKQFVDPLETGQDARAAMNLHNNEAGRKAVKSTMKRTCKCHGVSGSCTTQTCWLQLPEFREVGNYLKEKYHKALKVDLFHGAGNSAASRGAIAETFRSISKKEIVHLEDSPDYCLENKTLGLLGTEGRECLKRGKALSKWEKRSCRRLCGDCGLAVKERRADMVSSCNCKFHWCCAVKCEQCRKSVTKYFCVKKEKRGGGIPRKKESKLKKKL</sequence>
<reference key="1">
    <citation type="journal article" date="1995" name="Development">
        <title>Xwnt-8b: a maternally expressed Xenopus Wnt gene with a potential role in establishing the dorsoventral axis.</title>
        <authorList>
            <person name="Cui Y."/>
            <person name="Brown J.D."/>
            <person name="Moon R.T."/>
            <person name="Christian J.L."/>
        </authorList>
    </citation>
    <scope>NUCLEOTIDE SEQUENCE [MRNA]</scope>
</reference>
<reference key="2">
    <citation type="journal article" date="1992" name="Oncogene">
        <title>Cloning and developmental expression in Xenopus laevis of seven additional members of the Wnt family.</title>
        <authorList>
            <person name="Wolda S.L."/>
            <person name="Moon R.T."/>
        </authorList>
    </citation>
    <scope>NUCLEOTIDE SEQUENCE [MRNA] OF 278-390</scope>
</reference>
<protein>
    <recommendedName>
        <fullName>Protein Wnt-8b</fullName>
        <shortName>XWnt-8b</shortName>
    </recommendedName>
</protein>
<gene>
    <name type="primary">wnt8b</name>
</gene>